<sequence length="619" mass="69656">MKRLGHVPIHKGDFHLLPPKVQRFVAEKAELMRPRGIYICDGSQHEADEIIDKLIERGMLSPLKAYENNYICRTDPKDVARVESKTWMVTPDKYQTVCHTPDGIEPIMGHWMSPDSLATELDSRFPGCMAGRIMYVIPFSMGPVGGPLSKIGVQLTDSNYVVLSMRIMTRVGHEVWDALGDNDFVRCIHSVGLPRPVKQRVINHWPCNPERVLIAHRPAEREIWSFGSGYGGNSLLGKKMLALRIASNIAKDEGWMAEHMLIMGVTRPDGKEHFIAAAFPSACGKTNLAMLEPALPGWKVRCVGDDIAWMKFGEDGRLYAINPEYGFFGVAPGTSKKTNPMAVATFQKNSIFTNVGETANGEYFWEGLEDEIKDKNVDMINWLGEKWRIGDPGLCAHPNSRFAAPASQCPIIHPEWESPKGVPIDAIIFGGRRPAGVPLVFETRSWLHGIFTGACLKSEATAAAEHKGKTVMHDPMAMRPFMGYNFGHYLQHWIDLNKDGRKVPKIYHVNWFRRDANNKFLWPGYGQNIRVIDWIVRRLDGEPDIGVDTPIGIVPKKGAINASGLPDIQWDELMSVPKEYWTNDAKEIRKFLEEQVGPDLPKEIRAEMDAQEERINKQA</sequence>
<gene>
    <name type="primary">PEPCK</name>
</gene>
<organism>
    <name type="scientific">Haemonchus contortus</name>
    <name type="common">Barber pole worm</name>
    <dbReference type="NCBI Taxonomy" id="6289"/>
    <lineage>
        <taxon>Eukaryota</taxon>
        <taxon>Metazoa</taxon>
        <taxon>Ecdysozoa</taxon>
        <taxon>Nematoda</taxon>
        <taxon>Chromadorea</taxon>
        <taxon>Rhabditida</taxon>
        <taxon>Rhabditina</taxon>
        <taxon>Rhabditomorpha</taxon>
        <taxon>Strongyloidea</taxon>
        <taxon>Trichostrongylidae</taxon>
        <taxon>Haemonchus</taxon>
    </lineage>
</organism>
<comment type="function">
    <text>In parasitic nematodes PEPCK carboxylates phosphoenolpyruvate to oxaloacetate thus introducing the products of glycolysis to mitochondrial metabolism.</text>
</comment>
<comment type="function">
    <text evidence="1">Catalyzes the conversion of oxaloacetate (OAA) to phosphoenolpyruvate (PEP), the rate-limiting step in the metabolic pathway that produces glucose from lactate and other precursors derived from the citric acid cycle.</text>
</comment>
<comment type="catalytic activity">
    <reaction>
        <text>oxaloacetate + GTP = phosphoenolpyruvate + GDP + CO2</text>
        <dbReference type="Rhea" id="RHEA:10388"/>
        <dbReference type="ChEBI" id="CHEBI:16452"/>
        <dbReference type="ChEBI" id="CHEBI:16526"/>
        <dbReference type="ChEBI" id="CHEBI:37565"/>
        <dbReference type="ChEBI" id="CHEBI:58189"/>
        <dbReference type="ChEBI" id="CHEBI:58702"/>
        <dbReference type="EC" id="4.1.1.32"/>
    </reaction>
</comment>
<comment type="cofactor">
    <cofactor evidence="1">
        <name>Mn(2+)</name>
        <dbReference type="ChEBI" id="CHEBI:29035"/>
    </cofactor>
    <text evidence="1">Binds 1 Mn(2+) ion per subunit.</text>
</comment>
<comment type="subunit">
    <text>Monomer.</text>
</comment>
<comment type="similarity">
    <text evidence="3">Belongs to the phosphoenolpyruvate carboxykinase [GTP] family.</text>
</comment>
<accession>P29190</accession>
<feature type="chain" id="PRO_0000103633" description="Phosphoenolpyruvate carboxykinase [GTP]">
    <location>
        <begin position="1"/>
        <end position="619"/>
    </location>
</feature>
<feature type="active site" evidence="2">
    <location>
        <position position="283"/>
    </location>
</feature>
<feature type="binding site" evidence="2">
    <location>
        <position position="81"/>
    </location>
    <ligand>
        <name>substrate</name>
    </ligand>
</feature>
<feature type="binding site" evidence="2">
    <location>
        <begin position="230"/>
        <end position="232"/>
    </location>
    <ligand>
        <name>substrate</name>
    </ligand>
</feature>
<feature type="binding site" evidence="2">
    <location>
        <position position="239"/>
    </location>
    <ligand>
        <name>Mn(2+)</name>
        <dbReference type="ChEBI" id="CHEBI:29035"/>
    </ligand>
</feature>
<feature type="binding site" evidence="2">
    <location>
        <position position="259"/>
    </location>
    <ligand>
        <name>Mn(2+)</name>
        <dbReference type="ChEBI" id="CHEBI:29035"/>
    </ligand>
</feature>
<feature type="binding site" evidence="2">
    <location>
        <position position="281"/>
    </location>
    <ligand>
        <name>substrate</name>
    </ligand>
</feature>
<feature type="binding site" evidence="2">
    <location>
        <begin position="282"/>
        <end position="287"/>
    </location>
    <ligand>
        <name>GTP</name>
        <dbReference type="ChEBI" id="CHEBI:37565"/>
    </ligand>
</feature>
<feature type="binding site" evidence="2">
    <location>
        <position position="306"/>
    </location>
    <ligand>
        <name>Mn(2+)</name>
        <dbReference type="ChEBI" id="CHEBI:29035"/>
    </ligand>
</feature>
<feature type="binding site" evidence="2">
    <location>
        <begin position="399"/>
        <end position="401"/>
    </location>
    <ligand>
        <name>substrate</name>
    </ligand>
</feature>
<feature type="binding site" evidence="2">
    <location>
        <position position="401"/>
    </location>
    <ligand>
        <name>GTP</name>
        <dbReference type="ChEBI" id="CHEBI:37565"/>
    </ligand>
</feature>
<feature type="binding site" evidence="2">
    <location>
        <position position="432"/>
    </location>
    <ligand>
        <name>GTP</name>
        <dbReference type="ChEBI" id="CHEBI:37565"/>
    </ligand>
</feature>
<feature type="binding site" evidence="2">
    <location>
        <begin position="525"/>
        <end position="528"/>
    </location>
    <ligand>
        <name>GTP</name>
        <dbReference type="ChEBI" id="CHEBI:37565"/>
    </ligand>
</feature>
<name>PCKG_HAECO</name>
<dbReference type="EC" id="4.1.1.32"/>
<dbReference type="EMBL" id="M76494">
    <property type="protein sequence ID" value="AAA29180.1"/>
    <property type="molecule type" value="mRNA"/>
</dbReference>
<dbReference type="PIR" id="A45625">
    <property type="entry name" value="A45625"/>
</dbReference>
<dbReference type="SMR" id="P29190"/>
<dbReference type="Proteomes" id="UP000025227">
    <property type="component" value="Unplaced"/>
</dbReference>
<dbReference type="GO" id="GO:0005829">
    <property type="term" value="C:cytosol"/>
    <property type="evidence" value="ECO:0007669"/>
    <property type="project" value="TreeGrafter"/>
</dbReference>
<dbReference type="GO" id="GO:0005525">
    <property type="term" value="F:GTP binding"/>
    <property type="evidence" value="ECO:0007669"/>
    <property type="project" value="UniProtKB-KW"/>
</dbReference>
<dbReference type="GO" id="GO:0030145">
    <property type="term" value="F:manganese ion binding"/>
    <property type="evidence" value="ECO:0007669"/>
    <property type="project" value="TreeGrafter"/>
</dbReference>
<dbReference type="GO" id="GO:0004613">
    <property type="term" value="F:phosphoenolpyruvate carboxykinase (GTP) activity"/>
    <property type="evidence" value="ECO:0007669"/>
    <property type="project" value="UniProtKB-EC"/>
</dbReference>
<dbReference type="GO" id="GO:0071333">
    <property type="term" value="P:cellular response to glucose stimulus"/>
    <property type="evidence" value="ECO:0007669"/>
    <property type="project" value="TreeGrafter"/>
</dbReference>
<dbReference type="GO" id="GO:0006094">
    <property type="term" value="P:gluconeogenesis"/>
    <property type="evidence" value="ECO:0007669"/>
    <property type="project" value="InterPro"/>
</dbReference>
<dbReference type="GO" id="GO:0046327">
    <property type="term" value="P:glycerol biosynthetic process from pyruvate"/>
    <property type="evidence" value="ECO:0007669"/>
    <property type="project" value="TreeGrafter"/>
</dbReference>
<dbReference type="GO" id="GO:0006107">
    <property type="term" value="P:oxaloacetate metabolic process"/>
    <property type="evidence" value="ECO:0007669"/>
    <property type="project" value="TreeGrafter"/>
</dbReference>
<dbReference type="GO" id="GO:0019543">
    <property type="term" value="P:propionate catabolic process"/>
    <property type="evidence" value="ECO:0007669"/>
    <property type="project" value="TreeGrafter"/>
</dbReference>
<dbReference type="GO" id="GO:0033993">
    <property type="term" value="P:response to lipid"/>
    <property type="evidence" value="ECO:0007669"/>
    <property type="project" value="TreeGrafter"/>
</dbReference>
<dbReference type="GO" id="GO:0042594">
    <property type="term" value="P:response to starvation"/>
    <property type="evidence" value="ECO:0007669"/>
    <property type="project" value="TreeGrafter"/>
</dbReference>
<dbReference type="CDD" id="cd00819">
    <property type="entry name" value="PEPCK_GTP"/>
    <property type="match status" value="1"/>
</dbReference>
<dbReference type="FunFam" id="3.90.228.20:FF:000005">
    <property type="entry name" value="Phosphoenolpyruvate carboxykinase [GTP], mitochondrial"/>
    <property type="match status" value="1"/>
</dbReference>
<dbReference type="FunFam" id="3.40.449.10:FF:000003">
    <property type="entry name" value="Phosphoenolpyruvate carboxykinase, cytosolic [GTP]"/>
    <property type="match status" value="1"/>
</dbReference>
<dbReference type="Gene3D" id="3.90.228.20">
    <property type="match status" value="1"/>
</dbReference>
<dbReference type="Gene3D" id="3.40.449.10">
    <property type="entry name" value="Phosphoenolpyruvate Carboxykinase, domain 1"/>
    <property type="match status" value="1"/>
</dbReference>
<dbReference type="Gene3D" id="2.170.8.10">
    <property type="entry name" value="Phosphoenolpyruvate Carboxykinase, domain 2"/>
    <property type="match status" value="1"/>
</dbReference>
<dbReference type="HAMAP" id="MF_00452">
    <property type="entry name" value="PEPCK_GTP"/>
    <property type="match status" value="1"/>
</dbReference>
<dbReference type="InterPro" id="IPR018091">
    <property type="entry name" value="PEP_carboxykin_GTP_CS"/>
</dbReference>
<dbReference type="InterPro" id="IPR013035">
    <property type="entry name" value="PEP_carboxykinase_C"/>
</dbReference>
<dbReference type="InterPro" id="IPR008209">
    <property type="entry name" value="PEP_carboxykinase_GTP"/>
</dbReference>
<dbReference type="InterPro" id="IPR035077">
    <property type="entry name" value="PEP_carboxykinase_GTP_C"/>
</dbReference>
<dbReference type="InterPro" id="IPR035078">
    <property type="entry name" value="PEP_carboxykinase_GTP_N"/>
</dbReference>
<dbReference type="InterPro" id="IPR008210">
    <property type="entry name" value="PEP_carboxykinase_N"/>
</dbReference>
<dbReference type="NCBIfam" id="NF003253">
    <property type="entry name" value="PRK04210.1"/>
    <property type="match status" value="1"/>
</dbReference>
<dbReference type="PANTHER" id="PTHR11561">
    <property type="entry name" value="PHOSPHOENOLPYRUVATE CARBOXYKINASE"/>
    <property type="match status" value="1"/>
</dbReference>
<dbReference type="PANTHER" id="PTHR11561:SF16">
    <property type="entry name" value="PHOSPHOENOLPYRUVATE CARBOXYKINASE (GTP)"/>
    <property type="match status" value="1"/>
</dbReference>
<dbReference type="Pfam" id="PF00821">
    <property type="entry name" value="PEPCK_GTP"/>
    <property type="match status" value="1"/>
</dbReference>
<dbReference type="Pfam" id="PF17297">
    <property type="entry name" value="PEPCK_N"/>
    <property type="match status" value="1"/>
</dbReference>
<dbReference type="PIRSF" id="PIRSF001348">
    <property type="entry name" value="PEP_carboxykinase_GTP"/>
    <property type="match status" value="1"/>
</dbReference>
<dbReference type="SUPFAM" id="SSF68923">
    <property type="entry name" value="PEP carboxykinase N-terminal domain"/>
    <property type="match status" value="1"/>
</dbReference>
<dbReference type="SUPFAM" id="SSF53795">
    <property type="entry name" value="PEP carboxykinase-like"/>
    <property type="match status" value="1"/>
</dbReference>
<dbReference type="PROSITE" id="PS00505">
    <property type="entry name" value="PEPCK_GTP"/>
    <property type="match status" value="1"/>
</dbReference>
<protein>
    <recommendedName>
        <fullName>Phosphoenolpyruvate carboxykinase [GTP]</fullName>
        <shortName>PEPCK</shortName>
        <ecNumber>4.1.1.32</ecNumber>
    </recommendedName>
</protein>
<proteinExistence type="evidence at transcript level"/>
<evidence type="ECO:0000250" key="1"/>
<evidence type="ECO:0000250" key="2">
    <source>
        <dbReference type="UniProtKB" id="P07379"/>
    </source>
</evidence>
<evidence type="ECO:0000305" key="3"/>
<reference key="1">
    <citation type="journal article" date="1992" name="Mol. Biochem. Parasitol.">
        <title>Cloning of a cDNA encoding phosphoenolpyruvate carboxykinase from Haemonchus contortus.</title>
        <authorList>
            <person name="Klein R.D."/>
            <person name="Winterrowd C.A."/>
            <person name="Hatzenbuhler N.T."/>
            <person name="Shea M.H."/>
            <person name="Favreau M.A."/>
            <person name="Nulf S.C."/>
            <person name="Geary T.G."/>
        </authorList>
    </citation>
    <scope>NUCLEOTIDE SEQUENCE [MRNA]</scope>
</reference>
<keyword id="KW-0210">Decarboxylase</keyword>
<keyword id="KW-0342">GTP-binding</keyword>
<keyword id="KW-0456">Lyase</keyword>
<keyword id="KW-0464">Manganese</keyword>
<keyword id="KW-0479">Metal-binding</keyword>
<keyword id="KW-0547">Nucleotide-binding</keyword>